<comment type="function">
    <text evidence="4">Acts as a transcriptional repressor. A histone deacetylase (HDAC) activity is required for transcription repression. May play a role in telomere stability.</text>
</comment>
<comment type="subunit">
    <text evidence="4">Interacts (via PAH3) with ALY2. Interacts (via PAH2) with TBP1. Interacts with ALY3, GATA21, TRP2, TKI1, VAL1, SKP1B, FBX5 and PUB14.</text>
</comment>
<comment type="interaction">
    <interactant intactId="EBI-2616294">
        <id>Q9SRH9</id>
    </interactant>
    <interactant intactId="EBI-2616358">
        <id>Q6A333</id>
        <label>ALY2</label>
    </interactant>
    <organismsDiffer>false</organismsDiffer>
    <experiments>2</experiments>
</comment>
<comment type="interaction">
    <interactant intactId="EBI-2616294">
        <id>Q9SRH9</id>
    </interactant>
    <interactant intactId="EBI-2616485">
        <id>Q9FFY9</id>
        <label>TRP4</label>
    </interactant>
    <organismsDiffer>false</organismsDiffer>
    <experiments>2</experiments>
</comment>
<comment type="subcellular location">
    <subcellularLocation>
        <location evidence="2 4">Nucleus</location>
    </subcellularLocation>
</comment>
<comment type="alternative products">
    <event type="alternative splicing"/>
    <isoform>
        <id>Q9SRH9-1</id>
        <name>1</name>
        <sequence type="displayed"/>
    </isoform>
    <text>A number of isoforms are produced. According to EST sequences.</text>
</comment>
<comment type="sequence caution" evidence="5">
    <conflict type="erroneous gene model prediction">
        <sequence resource="EMBL-CDS" id="AAF03494"/>
    </conflict>
</comment>
<protein>
    <recommendedName>
        <fullName>Paired amphipathic helix protein Sin3-like 1</fullName>
    </recommendedName>
</protein>
<evidence type="ECO:0000250" key="1">
    <source>
        <dbReference type="UniProtKB" id="Q9LFQ3"/>
    </source>
</evidence>
<evidence type="ECO:0000255" key="2">
    <source>
        <dbReference type="PROSITE-ProRule" id="PRU00810"/>
    </source>
</evidence>
<evidence type="ECO:0000256" key="3">
    <source>
        <dbReference type="SAM" id="MobiDB-lite"/>
    </source>
</evidence>
<evidence type="ECO:0000269" key="4">
    <source>
    </source>
</evidence>
<evidence type="ECO:0000305" key="5"/>
<name>SNL1_ARATH</name>
<feature type="chain" id="PRO_0000394040" description="Paired amphipathic helix protein Sin3-like 1">
    <location>
        <begin position="1"/>
        <end position="1372"/>
    </location>
</feature>
<feature type="domain" description="PAH 1" evidence="2">
    <location>
        <begin position="51"/>
        <end position="121"/>
    </location>
</feature>
<feature type="domain" description="PAH 2" evidence="2">
    <location>
        <begin position="136"/>
        <end position="206"/>
    </location>
</feature>
<feature type="domain" description="PAH 3" evidence="2">
    <location>
        <begin position="331"/>
        <end position="400"/>
    </location>
</feature>
<feature type="region of interest" description="Disordered" evidence="3">
    <location>
        <begin position="1"/>
        <end position="50"/>
    </location>
</feature>
<feature type="region of interest" description="Disordered" evidence="3">
    <location>
        <begin position="210"/>
        <end position="244"/>
    </location>
</feature>
<feature type="region of interest" description="Disordered" evidence="3">
    <location>
        <begin position="272"/>
        <end position="323"/>
    </location>
</feature>
<feature type="region of interest" description="Disordered" evidence="3">
    <location>
        <begin position="764"/>
        <end position="783"/>
    </location>
</feature>
<feature type="region of interest" description="Disordered" evidence="3">
    <location>
        <begin position="791"/>
        <end position="817"/>
    </location>
</feature>
<feature type="region of interest" description="Disordered" evidence="3">
    <location>
        <begin position="934"/>
        <end position="1056"/>
    </location>
</feature>
<feature type="compositionally biased region" description="Low complexity" evidence="3">
    <location>
        <begin position="210"/>
        <end position="222"/>
    </location>
</feature>
<feature type="compositionally biased region" description="Basic and acidic residues" evidence="3">
    <location>
        <begin position="272"/>
        <end position="315"/>
    </location>
</feature>
<feature type="compositionally biased region" description="Basic and acidic residues" evidence="3">
    <location>
        <begin position="938"/>
        <end position="957"/>
    </location>
</feature>
<feature type="compositionally biased region" description="Acidic residues" evidence="3">
    <location>
        <begin position="990"/>
        <end position="1013"/>
    </location>
</feature>
<feature type="compositionally biased region" description="Acidic residues" evidence="3">
    <location>
        <begin position="1028"/>
        <end position="1042"/>
    </location>
</feature>
<feature type="modified residue" description="Phosphoserine" evidence="1">
    <location>
        <position position="1049"/>
    </location>
</feature>
<organism>
    <name type="scientific">Arabidopsis thaliana</name>
    <name type="common">Mouse-ear cress</name>
    <dbReference type="NCBI Taxonomy" id="3702"/>
    <lineage>
        <taxon>Eukaryota</taxon>
        <taxon>Viridiplantae</taxon>
        <taxon>Streptophyta</taxon>
        <taxon>Embryophyta</taxon>
        <taxon>Tracheophyta</taxon>
        <taxon>Spermatophyta</taxon>
        <taxon>Magnoliopsida</taxon>
        <taxon>eudicotyledons</taxon>
        <taxon>Gunneridae</taxon>
        <taxon>Pentapetalae</taxon>
        <taxon>rosids</taxon>
        <taxon>malvids</taxon>
        <taxon>Brassicales</taxon>
        <taxon>Brassicaceae</taxon>
        <taxon>Camelineae</taxon>
        <taxon>Arabidopsis</taxon>
    </lineage>
</organism>
<accession>Q9SRH9</accession>
<proteinExistence type="evidence at protein level"/>
<keyword id="KW-0025">Alternative splicing</keyword>
<keyword id="KW-0539">Nucleus</keyword>
<keyword id="KW-0597">Phosphoprotein</keyword>
<keyword id="KW-1185">Reference proteome</keyword>
<keyword id="KW-0677">Repeat</keyword>
<keyword id="KW-0678">Repressor</keyword>
<keyword id="KW-0804">Transcription</keyword>
<keyword id="KW-0805">Transcription regulation</keyword>
<dbReference type="EMBL" id="AC010676">
    <property type="protein sequence ID" value="AAF03494.1"/>
    <property type="status" value="ALT_SEQ"/>
    <property type="molecule type" value="Genomic_DNA"/>
</dbReference>
<dbReference type="EMBL" id="CP002686">
    <property type="protein sequence ID" value="AEE73639.1"/>
    <property type="molecule type" value="Genomic_DNA"/>
</dbReference>
<dbReference type="RefSeq" id="NP_186781.4">
    <molecule id="Q9SRH9-1"/>
    <property type="nucleotide sequence ID" value="NM_110998.5"/>
</dbReference>
<dbReference type="SMR" id="Q9SRH9"/>
<dbReference type="BioGRID" id="6598">
    <property type="interactions" value="14"/>
</dbReference>
<dbReference type="FunCoup" id="Q9SRH9">
    <property type="interactions" value="4057"/>
</dbReference>
<dbReference type="IntAct" id="Q9SRH9">
    <property type="interactions" value="13"/>
</dbReference>
<dbReference type="STRING" id="3702.Q9SRH9"/>
<dbReference type="iPTMnet" id="Q9SRH9"/>
<dbReference type="PaxDb" id="3702-AT3G01320.1"/>
<dbReference type="ProteomicsDB" id="232626">
    <molecule id="Q9SRH9-1"/>
</dbReference>
<dbReference type="EnsemblPlants" id="AT3G01320.1">
    <molecule id="Q9SRH9-1"/>
    <property type="protein sequence ID" value="AT3G01320.1"/>
    <property type="gene ID" value="AT3G01320"/>
</dbReference>
<dbReference type="GeneID" id="821265"/>
<dbReference type="Gramene" id="AT3G01320.1">
    <molecule id="Q9SRH9-1"/>
    <property type="protein sequence ID" value="AT3G01320.1"/>
    <property type="gene ID" value="AT3G01320"/>
</dbReference>
<dbReference type="KEGG" id="ath:AT3G01320"/>
<dbReference type="Araport" id="AT3G01320"/>
<dbReference type="TAIR" id="AT3G01320">
    <property type="gene designation" value="SNL1"/>
</dbReference>
<dbReference type="eggNOG" id="KOG4204">
    <property type="taxonomic scope" value="Eukaryota"/>
</dbReference>
<dbReference type="InParanoid" id="Q9SRH9"/>
<dbReference type="OMA" id="MAMEHVI"/>
<dbReference type="PRO" id="PR:Q9SRH9"/>
<dbReference type="Proteomes" id="UP000006548">
    <property type="component" value="Chromosome 3"/>
</dbReference>
<dbReference type="ExpressionAtlas" id="Q9SRH9">
    <property type="expression patterns" value="baseline and differential"/>
</dbReference>
<dbReference type="GO" id="GO:0005634">
    <property type="term" value="C:nucleus"/>
    <property type="evidence" value="ECO:0000314"/>
    <property type="project" value="UniProtKB"/>
</dbReference>
<dbReference type="GO" id="GO:0003714">
    <property type="term" value="F:transcription corepressor activity"/>
    <property type="evidence" value="ECO:0007669"/>
    <property type="project" value="InterPro"/>
</dbReference>
<dbReference type="GO" id="GO:0045892">
    <property type="term" value="P:negative regulation of DNA-templated transcription"/>
    <property type="evidence" value="ECO:0000314"/>
    <property type="project" value="UniProtKB"/>
</dbReference>
<dbReference type="FunFam" id="1.20.1160.11:FF:000002">
    <property type="entry name" value="Paired amphipathic helix protein SIN3"/>
    <property type="match status" value="1"/>
</dbReference>
<dbReference type="FunFam" id="1.20.1160.11:FF:000001">
    <property type="entry name" value="Paired amphipathic helix protein Sin3"/>
    <property type="match status" value="1"/>
</dbReference>
<dbReference type="FunFam" id="1.20.1160.11:FF:000003">
    <property type="entry name" value="Paired amphipathic helix SIN3-like protein"/>
    <property type="match status" value="1"/>
</dbReference>
<dbReference type="Gene3D" id="1.20.1160.11">
    <property type="entry name" value="Paired amphipathic helix"/>
    <property type="match status" value="3"/>
</dbReference>
<dbReference type="InterPro" id="IPR013194">
    <property type="entry name" value="HDAC_interact_dom"/>
</dbReference>
<dbReference type="InterPro" id="IPR003822">
    <property type="entry name" value="PAH"/>
</dbReference>
<dbReference type="InterPro" id="IPR036600">
    <property type="entry name" value="PAH_sf"/>
</dbReference>
<dbReference type="InterPro" id="IPR039774">
    <property type="entry name" value="Sin3-like"/>
</dbReference>
<dbReference type="InterPro" id="IPR031693">
    <property type="entry name" value="Sin3_C"/>
</dbReference>
<dbReference type="PANTHER" id="PTHR12346:SF68">
    <property type="entry name" value="PAIRED AMPHIPATHIC HELIX PROTEIN SIN3-LIKE 1"/>
    <property type="match status" value="1"/>
</dbReference>
<dbReference type="PANTHER" id="PTHR12346">
    <property type="entry name" value="SIN3B-RELATED"/>
    <property type="match status" value="1"/>
</dbReference>
<dbReference type="Pfam" id="PF02671">
    <property type="entry name" value="PAH"/>
    <property type="match status" value="3"/>
</dbReference>
<dbReference type="Pfam" id="PF08295">
    <property type="entry name" value="Sin3_corepress"/>
    <property type="match status" value="1"/>
</dbReference>
<dbReference type="Pfam" id="PF16879">
    <property type="entry name" value="Sin3a_C"/>
    <property type="match status" value="1"/>
</dbReference>
<dbReference type="SMART" id="SM00761">
    <property type="entry name" value="HDAC_interact"/>
    <property type="match status" value="1"/>
</dbReference>
<dbReference type="SUPFAM" id="SSF47762">
    <property type="entry name" value="PAH2 domain"/>
    <property type="match status" value="3"/>
</dbReference>
<dbReference type="PROSITE" id="PS51477">
    <property type="entry name" value="PAH"/>
    <property type="match status" value="3"/>
</dbReference>
<reference key="1">
    <citation type="journal article" date="2010" name="J. Mol. Biol.">
        <title>PAH-domain-specific interactions of the Arabidopsis transcription coregulator SIN3-LIKE1 (SNL1) with telomere-binding protein 1 and ALWAYS EARLY2 Myb-DNA binding factors.</title>
        <authorList>
            <person name="Bowen A.J."/>
            <person name="Gonzalez D."/>
            <person name="Mullins J.G."/>
            <person name="Bhatt A.M."/>
            <person name="Martinez A."/>
            <person name="Conlan R.S."/>
        </authorList>
    </citation>
    <scope>NUCLEOTIDE SEQUENCE [MRNA]</scope>
    <scope>FUNCTION</scope>
    <scope>SUBCELLULAR LOCATION</scope>
    <scope>INTERACTION WITH ALY2; ALY3; GATA21; TBP1; TRP2; TKI1; VAL1; SKP1B; FBX5 AND PUB14</scope>
    <scope>GENE FAMILY</scope>
    <scope>NOMENCLATURE</scope>
</reference>
<reference key="2">
    <citation type="journal article" date="2000" name="Nature">
        <title>Sequence and analysis of chromosome 3 of the plant Arabidopsis thaliana.</title>
        <authorList>
            <person name="Salanoubat M."/>
            <person name="Lemcke K."/>
            <person name="Rieger M."/>
            <person name="Ansorge W."/>
            <person name="Unseld M."/>
            <person name="Fartmann B."/>
            <person name="Valle G."/>
            <person name="Bloecker H."/>
            <person name="Perez-Alonso M."/>
            <person name="Obermaier B."/>
            <person name="Delseny M."/>
            <person name="Boutry M."/>
            <person name="Grivell L.A."/>
            <person name="Mache R."/>
            <person name="Puigdomenech P."/>
            <person name="De Simone V."/>
            <person name="Choisne N."/>
            <person name="Artiguenave F."/>
            <person name="Robert C."/>
            <person name="Brottier P."/>
            <person name="Wincker P."/>
            <person name="Cattolico L."/>
            <person name="Weissenbach J."/>
            <person name="Saurin W."/>
            <person name="Quetier F."/>
            <person name="Schaefer M."/>
            <person name="Mueller-Auer S."/>
            <person name="Gabel C."/>
            <person name="Fuchs M."/>
            <person name="Benes V."/>
            <person name="Wurmbach E."/>
            <person name="Drzonek H."/>
            <person name="Erfle H."/>
            <person name="Jordan N."/>
            <person name="Bangert S."/>
            <person name="Wiedelmann R."/>
            <person name="Kranz H."/>
            <person name="Voss H."/>
            <person name="Holland R."/>
            <person name="Brandt P."/>
            <person name="Nyakatura G."/>
            <person name="Vezzi A."/>
            <person name="D'Angelo M."/>
            <person name="Pallavicini A."/>
            <person name="Toppo S."/>
            <person name="Simionati B."/>
            <person name="Conrad A."/>
            <person name="Hornischer K."/>
            <person name="Kauer G."/>
            <person name="Loehnert T.-H."/>
            <person name="Nordsiek G."/>
            <person name="Reichelt J."/>
            <person name="Scharfe M."/>
            <person name="Schoen O."/>
            <person name="Bargues M."/>
            <person name="Terol J."/>
            <person name="Climent J."/>
            <person name="Navarro P."/>
            <person name="Collado C."/>
            <person name="Perez-Perez A."/>
            <person name="Ottenwaelder B."/>
            <person name="Duchemin D."/>
            <person name="Cooke R."/>
            <person name="Laudie M."/>
            <person name="Berger-Llauro C."/>
            <person name="Purnelle B."/>
            <person name="Masuy D."/>
            <person name="de Haan M."/>
            <person name="Maarse A.C."/>
            <person name="Alcaraz J.-P."/>
            <person name="Cottet A."/>
            <person name="Casacuberta E."/>
            <person name="Monfort A."/>
            <person name="Argiriou A."/>
            <person name="Flores M."/>
            <person name="Liguori R."/>
            <person name="Vitale D."/>
            <person name="Mannhaupt G."/>
            <person name="Haase D."/>
            <person name="Schoof H."/>
            <person name="Rudd S."/>
            <person name="Zaccaria P."/>
            <person name="Mewes H.-W."/>
            <person name="Mayer K.F.X."/>
            <person name="Kaul S."/>
            <person name="Town C.D."/>
            <person name="Koo H.L."/>
            <person name="Tallon L.J."/>
            <person name="Jenkins J."/>
            <person name="Rooney T."/>
            <person name="Rizzo M."/>
            <person name="Walts A."/>
            <person name="Utterback T."/>
            <person name="Fujii C.Y."/>
            <person name="Shea T.P."/>
            <person name="Creasy T.H."/>
            <person name="Haas B."/>
            <person name="Maiti R."/>
            <person name="Wu D."/>
            <person name="Peterson J."/>
            <person name="Van Aken S."/>
            <person name="Pai G."/>
            <person name="Militscher J."/>
            <person name="Sellers P."/>
            <person name="Gill J.E."/>
            <person name="Feldblyum T.V."/>
            <person name="Preuss D."/>
            <person name="Lin X."/>
            <person name="Nierman W.C."/>
            <person name="Salzberg S.L."/>
            <person name="White O."/>
            <person name="Venter J.C."/>
            <person name="Fraser C.M."/>
            <person name="Kaneko T."/>
            <person name="Nakamura Y."/>
            <person name="Sato S."/>
            <person name="Kato T."/>
            <person name="Asamizu E."/>
            <person name="Sasamoto S."/>
            <person name="Kimura T."/>
            <person name="Idesawa K."/>
            <person name="Kawashima K."/>
            <person name="Kishida Y."/>
            <person name="Kiyokawa C."/>
            <person name="Kohara M."/>
            <person name="Matsumoto M."/>
            <person name="Matsuno A."/>
            <person name="Muraki A."/>
            <person name="Nakayama S."/>
            <person name="Nakazaki N."/>
            <person name="Shinpo S."/>
            <person name="Takeuchi C."/>
            <person name="Wada T."/>
            <person name="Watanabe A."/>
            <person name="Yamada M."/>
            <person name="Yasuda M."/>
            <person name="Tabata S."/>
        </authorList>
    </citation>
    <scope>NUCLEOTIDE SEQUENCE [LARGE SCALE GENOMIC DNA]</scope>
    <source>
        <strain>cv. Columbia</strain>
    </source>
</reference>
<reference key="3">
    <citation type="journal article" date="2017" name="Plant J.">
        <title>Araport11: a complete reannotation of the Arabidopsis thaliana reference genome.</title>
        <authorList>
            <person name="Cheng C.Y."/>
            <person name="Krishnakumar V."/>
            <person name="Chan A.P."/>
            <person name="Thibaud-Nissen F."/>
            <person name="Schobel S."/>
            <person name="Town C.D."/>
        </authorList>
    </citation>
    <scope>GENOME REANNOTATION</scope>
    <source>
        <strain>cv. Columbia</strain>
    </source>
</reference>
<sequence>MKRIRDDVYASGSQFRRPLGSSRGQLCGQSPVHGSGDTEEEEEGGSRRVSQKLTTNDALSYLREVKEMFQDQREKYDRFLEVMKDFKAQRTDTGGVIARVKELFKGHNNLIYGFNTFLPKGYEITLIEEDDALPKKTVEFEQAINFVNKIKMRFKHDEHVYKSFLEILNMYRKENKEIKEVYNEVSILFQGHLDLLEQFTRFLPASLPSHSAAQHSRSQAQQYSDRGSDPPLLHQMQVEKERRRERAVALRGDYSVERYDLNDDKTMVKIQREQRKRLDKENRARRGRDLDDREAGQDNLHHFPEKRKSSRRAEALEAYSGSASHSEKDNLKSMYKQAFVFCEKVKDRLCSQDDYQTFLKCLNIFSNGIIQRKDLQNLVSDLLGKFPDLMDEFNQFFERCESITDGFQRLAGVMSKKLFSSEEQLSRPMKVEEKESEHKPELEAVKETEQCKKEYMGKSIQELDLSDCECCTPSYRLLPADYPIPIASQRSELGAEVLNDHWVSVTSGSEDYSFKHMRRNQYEESLFRCEDDRFELDMLLESVSSAARSAESLLNIITEKKISFSGSFRIEDHFTALNLRCIERLYGDHGLDVIDILNKNPATALPVILTRLKQKQGEWKKCRDDFDKVWANVYAKNHYKSLDHRSFYFKQQDSKNLSAKSLLAEIKELKEKSQNDDDVLLSISAGYRQPINPNLEYEYLNRAIHEDMFKVVQFSCEELCSTKEQLSKVLRLWENFLEAVLGVPPRAKGTDLVEDVVINPKTLDVNHSTSPNGEAAVSSGGDTARLASRKLKSAANGDENSSSGTFKHGIGLLNKDSTGKENLEDVEIANRDGVACSAVKPQKEQETGNEAEKRFGKPIPMDISERAAISSISIPSGAENNHCVVGKEVLPGAHEIQAKPSDTLTDIHHDVDSIETVHSTQGGDVGNSIVLANGLRSDSSKGTRNSDDPEGPSRNEKEEGELSPNGDFEDNFGVYKDHGVKSTSKPENSAEAEVEADAEVENEDDADDVDSENASEASGTESGGDVCSQDEDREEENGEHDEIDGKAESEGEAEGMDPHLLEGESELLPQSERVLLSVRPLSKHVAAVLCDERTKDLQVFYGNDDFYVLFRLHQILYERILYAKRNCSGGELKSKNLKDTNAGDPYARFMRVLYGLLDGSAENTKFEDECRAIIGNQSYVLFTLDKLIYRLVKQLQAIVADEMDNKLLQLYEYEKSRKPGRVIDSVYYENVRVLVHEENIYRLECSSLPSRLSIQLMDNIIEKPEAYAVSMDPTFASYMQTELLSVSSGKKEEGHDIVLQRNLTGLYDLCKAMEGVEVVNGLECKMSCSSYKIAYVLDTEDYFHRKKKKKKTEQLWQRNKVRVERFHRFLSA</sequence>
<gene>
    <name type="primary">SNL1</name>
    <name type="ordered locus">At3g01320</name>
    <name type="ORF">T22N4.5</name>
</gene>